<dbReference type="EMBL" id="AE014075">
    <property type="protein sequence ID" value="AAN81453.1"/>
    <property type="molecule type" value="Genomic_DNA"/>
</dbReference>
<dbReference type="RefSeq" id="WP_001267498.1">
    <property type="nucleotide sequence ID" value="NZ_CP051263.1"/>
</dbReference>
<dbReference type="STRING" id="199310.c3003"/>
<dbReference type="KEGG" id="ecc:c3003"/>
<dbReference type="eggNOG" id="COG2321">
    <property type="taxonomic scope" value="Bacteria"/>
</dbReference>
<dbReference type="HOGENOM" id="CLU_059329_0_0_6"/>
<dbReference type="BioCyc" id="ECOL199310:C3003-MONOMER"/>
<dbReference type="Proteomes" id="UP000001410">
    <property type="component" value="Chromosome"/>
</dbReference>
<dbReference type="GO" id="GO:0016020">
    <property type="term" value="C:membrane"/>
    <property type="evidence" value="ECO:0007669"/>
    <property type="project" value="UniProtKB-SubCell"/>
</dbReference>
<dbReference type="InterPro" id="IPR007343">
    <property type="entry name" value="Uncharacterised_pept_Zn_put"/>
</dbReference>
<dbReference type="PANTHER" id="PTHR30168:SF0">
    <property type="entry name" value="INNER MEMBRANE PROTEIN"/>
    <property type="match status" value="1"/>
</dbReference>
<dbReference type="PANTHER" id="PTHR30168">
    <property type="entry name" value="PUTATIVE MEMBRANE PROTEIN YPFJ"/>
    <property type="match status" value="1"/>
</dbReference>
<dbReference type="Pfam" id="PF04228">
    <property type="entry name" value="Zn_peptidase"/>
    <property type="match status" value="1"/>
</dbReference>
<name>YPFJ_ECOL6</name>
<reference key="1">
    <citation type="journal article" date="2002" name="Proc. Natl. Acad. Sci. U.S.A.">
        <title>Extensive mosaic structure revealed by the complete genome sequence of uropathogenic Escherichia coli.</title>
        <authorList>
            <person name="Welch R.A."/>
            <person name="Burland V."/>
            <person name="Plunkett G. III"/>
            <person name="Redford P."/>
            <person name="Roesch P."/>
            <person name="Rasko D."/>
            <person name="Buckles E.L."/>
            <person name="Liou S.-R."/>
            <person name="Boutin A."/>
            <person name="Hackett J."/>
            <person name="Stroud D."/>
            <person name="Mayhew G.F."/>
            <person name="Rose D.J."/>
            <person name="Zhou S."/>
            <person name="Schwartz D.C."/>
            <person name="Perna N.T."/>
            <person name="Mobley H.L.T."/>
            <person name="Donnenberg M.S."/>
            <person name="Blattner F.R."/>
        </authorList>
    </citation>
    <scope>NUCLEOTIDE SEQUENCE [LARGE SCALE GENOMIC DNA]</scope>
    <source>
        <strain>CFT073 / ATCC 700928 / UPEC</strain>
    </source>
</reference>
<keyword id="KW-0472">Membrane</keyword>
<keyword id="KW-1185">Reference proteome</keyword>
<keyword id="KW-0812">Transmembrane</keyword>
<keyword id="KW-1133">Transmembrane helix</keyword>
<proteinExistence type="predicted"/>
<feature type="chain" id="PRO_0000201341" description="Uncharacterized protein YpfJ">
    <location>
        <begin position="1"/>
        <end position="287"/>
    </location>
</feature>
<feature type="transmembrane region" description="Helical" evidence="1">
    <location>
        <begin position="38"/>
        <end position="60"/>
    </location>
</feature>
<feature type="region of interest" description="Disordered" evidence="2">
    <location>
        <begin position="1"/>
        <end position="29"/>
    </location>
</feature>
<feature type="compositionally biased region" description="Basic and acidic residues" evidence="2">
    <location>
        <begin position="1"/>
        <end position="17"/>
    </location>
</feature>
<evidence type="ECO:0000255" key="1"/>
<evidence type="ECO:0000256" key="2">
    <source>
        <dbReference type="SAM" id="MobiDB-lite"/>
    </source>
</evidence>
<evidence type="ECO:0000305" key="3"/>
<accession>P64430</accession>
<accession>P76563</accession>
<protein>
    <recommendedName>
        <fullName>Uncharacterized protein YpfJ</fullName>
    </recommendedName>
</protein>
<organism>
    <name type="scientific">Escherichia coli O6:H1 (strain CFT073 / ATCC 700928 / UPEC)</name>
    <dbReference type="NCBI Taxonomy" id="199310"/>
    <lineage>
        <taxon>Bacteria</taxon>
        <taxon>Pseudomonadati</taxon>
        <taxon>Pseudomonadota</taxon>
        <taxon>Gammaproteobacteria</taxon>
        <taxon>Enterobacterales</taxon>
        <taxon>Enterobacteriaceae</taxon>
        <taxon>Escherichia</taxon>
    </lineage>
</organism>
<comment type="subcellular location">
    <subcellularLocation>
        <location evidence="3">Membrane</location>
        <topology evidence="3">Single-pass membrane protein</topology>
    </subcellularLocation>
</comment>
<gene>
    <name type="primary">ypfJ</name>
    <name type="ordered locus">c3003</name>
</gene>
<sequence>MRWQGRRESDNVEDRRNSSGGPSMGGPGFRLPSGKGGLILLIVVLVAGYYGVDLTGLMTGQPVSQQQSTRSISPNEDEAAKFTSVILATTEDTWGQQFEKMGKTYQQPKLVMYRGMTRTGCGAGQSIMGPFYCPADGTVYIDLSFYDDMKDKLGADGDFAQGYVIAHEVGHHVQKLLGIEPKVRQLQQNATQAEVNRLSVRMELQADCFAGVWGHSMQQQGVLETGDLEEALNAAQAIGDDRLQQQSQGRVVPDSFTHGTSQQRYSWFKRGFDSGDPAQCNTFGKSI</sequence>